<keyword id="KW-0963">Cytoplasm</keyword>
<keyword id="KW-0342">GTP-binding</keyword>
<keyword id="KW-0547">Nucleotide-binding</keyword>
<keyword id="KW-0648">Protein biosynthesis</keyword>
<protein>
    <recommendedName>
        <fullName evidence="1">Peptide chain release factor 3</fullName>
        <shortName evidence="1">RF-3</shortName>
    </recommendedName>
</protein>
<evidence type="ECO:0000255" key="1">
    <source>
        <dbReference type="HAMAP-Rule" id="MF_00072"/>
    </source>
</evidence>
<reference key="1">
    <citation type="journal article" date="2009" name="Genome Biol.">
        <title>Genomic and genetic analyses of diversity and plant interactions of Pseudomonas fluorescens.</title>
        <authorList>
            <person name="Silby M.W."/>
            <person name="Cerdeno-Tarraga A.M."/>
            <person name="Vernikos G.S."/>
            <person name="Giddens S.R."/>
            <person name="Jackson R.W."/>
            <person name="Preston G.M."/>
            <person name="Zhang X.-X."/>
            <person name="Moon C.D."/>
            <person name="Gehrig S.M."/>
            <person name="Godfrey S.A.C."/>
            <person name="Knight C.G."/>
            <person name="Malone J.G."/>
            <person name="Robinson Z."/>
            <person name="Spiers A.J."/>
            <person name="Harris S."/>
            <person name="Challis G.L."/>
            <person name="Yaxley A.M."/>
            <person name="Harris D."/>
            <person name="Seeger K."/>
            <person name="Murphy L."/>
            <person name="Rutter S."/>
            <person name="Squares R."/>
            <person name="Quail M.A."/>
            <person name="Saunders E."/>
            <person name="Mavromatis K."/>
            <person name="Brettin T.S."/>
            <person name="Bentley S.D."/>
            <person name="Hothersall J."/>
            <person name="Stephens E."/>
            <person name="Thomas C.M."/>
            <person name="Parkhill J."/>
            <person name="Levy S.B."/>
            <person name="Rainey P.B."/>
            <person name="Thomson N.R."/>
        </authorList>
    </citation>
    <scope>NUCLEOTIDE SEQUENCE [LARGE SCALE GENOMIC DNA]</scope>
    <source>
        <strain>Pf0-1</strain>
    </source>
</reference>
<comment type="function">
    <text evidence="1">Increases the formation of ribosomal termination complexes and stimulates activities of RF-1 and RF-2. It binds guanine nucleotides and has strong preference for UGA stop codons. It may interact directly with the ribosome. The stimulation of RF-1 and RF-2 is significantly reduced by GTP and GDP, but not by GMP.</text>
</comment>
<comment type="subcellular location">
    <subcellularLocation>
        <location evidence="1">Cytoplasm</location>
    </subcellularLocation>
</comment>
<comment type="similarity">
    <text evidence="1">Belongs to the TRAFAC class translation factor GTPase superfamily. Classic translation factor GTPase family. PrfC subfamily.</text>
</comment>
<proteinExistence type="inferred from homology"/>
<accession>Q3KI56</accession>
<organism>
    <name type="scientific">Pseudomonas fluorescens (strain Pf0-1)</name>
    <dbReference type="NCBI Taxonomy" id="205922"/>
    <lineage>
        <taxon>Bacteria</taxon>
        <taxon>Pseudomonadati</taxon>
        <taxon>Pseudomonadota</taxon>
        <taxon>Gammaproteobacteria</taxon>
        <taxon>Pseudomonadales</taxon>
        <taxon>Pseudomonadaceae</taxon>
        <taxon>Pseudomonas</taxon>
    </lineage>
</organism>
<gene>
    <name evidence="1" type="primary">prfC</name>
    <name type="ordered locus">Pfl01_0807</name>
</gene>
<sequence>MTRQAAEVAKRRTFAIISHPDAGKTTITEKLLLMGKAIAVAGTVKSRKSDRHATSDWMEMEKQRGISITTSVMQFPYREHMINLLDTPGHEDFSEDTYRTLTAVDSALMVLDGGKGVEPRTIALMDVCRLRDTPIVSFINKLDRDIRDPIELLDEIEAVLKIKAAPITWPIGCYRDFKGVYHLADDYIIVYTAGHGHERTETKIIEKLDSDEARAHLGDEYERFLEQLELVQGACHEFNQQEFLDGQLTPVFFGTALGNFGVDHVLDAVVDWAPRPLPRVANERTVEPVEEKFSGFIFKIQANMDPKHRDRIAFMRICSGKYEKGMKMRHVRTGKDVRIGDALTFFSSEREQLEEAYAGDIIGLHNHGTIQIGDTFSEGETLGFTGIPHFAPELFRRVRLRDPLKSKQLRQGLQQLAEEGATQVFFPERSNDIILGAVGVLQFDVVASRLKEEYKVECSYEPITVYSARWIECSDKKKLEEFSNKAVENLALDGGGHLTYLAPTRVNLALMEERWPDVKFRATREHH</sequence>
<feature type="chain" id="PRO_0000242197" description="Peptide chain release factor 3">
    <location>
        <begin position="1"/>
        <end position="527"/>
    </location>
</feature>
<feature type="domain" description="tr-type G">
    <location>
        <begin position="9"/>
        <end position="277"/>
    </location>
</feature>
<feature type="binding site" evidence="1">
    <location>
        <begin position="18"/>
        <end position="25"/>
    </location>
    <ligand>
        <name>GTP</name>
        <dbReference type="ChEBI" id="CHEBI:37565"/>
    </ligand>
</feature>
<feature type="binding site" evidence="1">
    <location>
        <begin position="86"/>
        <end position="90"/>
    </location>
    <ligand>
        <name>GTP</name>
        <dbReference type="ChEBI" id="CHEBI:37565"/>
    </ligand>
</feature>
<feature type="binding site" evidence="1">
    <location>
        <begin position="140"/>
        <end position="143"/>
    </location>
    <ligand>
        <name>GTP</name>
        <dbReference type="ChEBI" id="CHEBI:37565"/>
    </ligand>
</feature>
<dbReference type="EMBL" id="CP000094">
    <property type="protein sequence ID" value="ABA72550.1"/>
    <property type="molecule type" value="Genomic_DNA"/>
</dbReference>
<dbReference type="RefSeq" id="WP_011332431.1">
    <property type="nucleotide sequence ID" value="NC_007492.2"/>
</dbReference>
<dbReference type="SMR" id="Q3KI56"/>
<dbReference type="KEGG" id="pfo:Pfl01_0807"/>
<dbReference type="eggNOG" id="COG4108">
    <property type="taxonomic scope" value="Bacteria"/>
</dbReference>
<dbReference type="HOGENOM" id="CLU_002794_2_1_6"/>
<dbReference type="Proteomes" id="UP000002704">
    <property type="component" value="Chromosome"/>
</dbReference>
<dbReference type="GO" id="GO:0005829">
    <property type="term" value="C:cytosol"/>
    <property type="evidence" value="ECO:0007669"/>
    <property type="project" value="TreeGrafter"/>
</dbReference>
<dbReference type="GO" id="GO:0005525">
    <property type="term" value="F:GTP binding"/>
    <property type="evidence" value="ECO:0007669"/>
    <property type="project" value="UniProtKB-UniRule"/>
</dbReference>
<dbReference type="GO" id="GO:0003924">
    <property type="term" value="F:GTPase activity"/>
    <property type="evidence" value="ECO:0007669"/>
    <property type="project" value="InterPro"/>
</dbReference>
<dbReference type="GO" id="GO:0097216">
    <property type="term" value="F:guanosine tetraphosphate binding"/>
    <property type="evidence" value="ECO:0007669"/>
    <property type="project" value="UniProtKB-ARBA"/>
</dbReference>
<dbReference type="GO" id="GO:0016150">
    <property type="term" value="F:translation release factor activity, codon nonspecific"/>
    <property type="evidence" value="ECO:0007669"/>
    <property type="project" value="TreeGrafter"/>
</dbReference>
<dbReference type="GO" id="GO:0016149">
    <property type="term" value="F:translation release factor activity, codon specific"/>
    <property type="evidence" value="ECO:0007669"/>
    <property type="project" value="UniProtKB-UniRule"/>
</dbReference>
<dbReference type="GO" id="GO:0006449">
    <property type="term" value="P:regulation of translational termination"/>
    <property type="evidence" value="ECO:0007669"/>
    <property type="project" value="UniProtKB-UniRule"/>
</dbReference>
<dbReference type="CDD" id="cd04169">
    <property type="entry name" value="RF3"/>
    <property type="match status" value="1"/>
</dbReference>
<dbReference type="CDD" id="cd03689">
    <property type="entry name" value="RF3_II"/>
    <property type="match status" value="1"/>
</dbReference>
<dbReference type="CDD" id="cd16259">
    <property type="entry name" value="RF3_III"/>
    <property type="match status" value="1"/>
</dbReference>
<dbReference type="FunFam" id="2.40.30.10:FF:000040">
    <property type="entry name" value="Peptide chain release factor 3"/>
    <property type="match status" value="1"/>
</dbReference>
<dbReference type="FunFam" id="3.30.70.3280:FF:000001">
    <property type="entry name" value="Peptide chain release factor 3"/>
    <property type="match status" value="1"/>
</dbReference>
<dbReference type="FunFam" id="3.40.50.300:FF:000542">
    <property type="entry name" value="Peptide chain release factor 3"/>
    <property type="match status" value="1"/>
</dbReference>
<dbReference type="Gene3D" id="3.40.50.300">
    <property type="entry name" value="P-loop containing nucleotide triphosphate hydrolases"/>
    <property type="match status" value="2"/>
</dbReference>
<dbReference type="Gene3D" id="3.30.70.3280">
    <property type="entry name" value="Peptide chain release factor 3, domain III"/>
    <property type="match status" value="1"/>
</dbReference>
<dbReference type="HAMAP" id="MF_00072">
    <property type="entry name" value="Rel_fac_3"/>
    <property type="match status" value="1"/>
</dbReference>
<dbReference type="InterPro" id="IPR053905">
    <property type="entry name" value="EF-G-like_DII"/>
</dbReference>
<dbReference type="InterPro" id="IPR035647">
    <property type="entry name" value="EFG_III/V"/>
</dbReference>
<dbReference type="InterPro" id="IPR031157">
    <property type="entry name" value="G_TR_CS"/>
</dbReference>
<dbReference type="InterPro" id="IPR027417">
    <property type="entry name" value="P-loop_NTPase"/>
</dbReference>
<dbReference type="InterPro" id="IPR004548">
    <property type="entry name" value="PrfC"/>
</dbReference>
<dbReference type="InterPro" id="IPR032090">
    <property type="entry name" value="RF3_C"/>
</dbReference>
<dbReference type="InterPro" id="IPR038467">
    <property type="entry name" value="RF3_dom_3_sf"/>
</dbReference>
<dbReference type="InterPro" id="IPR041732">
    <property type="entry name" value="RF3_GTP-bd"/>
</dbReference>
<dbReference type="InterPro" id="IPR005225">
    <property type="entry name" value="Small_GTP-bd"/>
</dbReference>
<dbReference type="InterPro" id="IPR000795">
    <property type="entry name" value="T_Tr_GTP-bd_dom"/>
</dbReference>
<dbReference type="InterPro" id="IPR009000">
    <property type="entry name" value="Transl_B-barrel_sf"/>
</dbReference>
<dbReference type="NCBIfam" id="TIGR00503">
    <property type="entry name" value="prfC"/>
    <property type="match status" value="1"/>
</dbReference>
<dbReference type="NCBIfam" id="NF001964">
    <property type="entry name" value="PRK00741.1"/>
    <property type="match status" value="1"/>
</dbReference>
<dbReference type="NCBIfam" id="TIGR00231">
    <property type="entry name" value="small_GTP"/>
    <property type="match status" value="1"/>
</dbReference>
<dbReference type="PANTHER" id="PTHR43556">
    <property type="entry name" value="PEPTIDE CHAIN RELEASE FACTOR RF3"/>
    <property type="match status" value="1"/>
</dbReference>
<dbReference type="PANTHER" id="PTHR43556:SF2">
    <property type="entry name" value="PEPTIDE CHAIN RELEASE FACTOR RF3"/>
    <property type="match status" value="1"/>
</dbReference>
<dbReference type="Pfam" id="PF22042">
    <property type="entry name" value="EF-G_D2"/>
    <property type="match status" value="1"/>
</dbReference>
<dbReference type="Pfam" id="PF00009">
    <property type="entry name" value="GTP_EFTU"/>
    <property type="match status" value="1"/>
</dbReference>
<dbReference type="Pfam" id="PF16658">
    <property type="entry name" value="RF3_C"/>
    <property type="match status" value="1"/>
</dbReference>
<dbReference type="PRINTS" id="PR00315">
    <property type="entry name" value="ELONGATNFCT"/>
</dbReference>
<dbReference type="SUPFAM" id="SSF54980">
    <property type="entry name" value="EF-G C-terminal domain-like"/>
    <property type="match status" value="1"/>
</dbReference>
<dbReference type="SUPFAM" id="SSF52540">
    <property type="entry name" value="P-loop containing nucleoside triphosphate hydrolases"/>
    <property type="match status" value="1"/>
</dbReference>
<dbReference type="SUPFAM" id="SSF50447">
    <property type="entry name" value="Translation proteins"/>
    <property type="match status" value="1"/>
</dbReference>
<dbReference type="PROSITE" id="PS00301">
    <property type="entry name" value="G_TR_1"/>
    <property type="match status" value="1"/>
</dbReference>
<dbReference type="PROSITE" id="PS51722">
    <property type="entry name" value="G_TR_2"/>
    <property type="match status" value="1"/>
</dbReference>
<name>RF3_PSEPF</name>